<proteinExistence type="inferred from homology"/>
<organism>
    <name type="scientific">Trichormus variabilis (strain ATCC 29413 / PCC 7937)</name>
    <name type="common">Anabaena variabilis</name>
    <dbReference type="NCBI Taxonomy" id="240292"/>
    <lineage>
        <taxon>Bacteria</taxon>
        <taxon>Bacillati</taxon>
        <taxon>Cyanobacteriota</taxon>
        <taxon>Cyanophyceae</taxon>
        <taxon>Nostocales</taxon>
        <taxon>Nostocaceae</taxon>
        <taxon>Trichormus</taxon>
    </lineage>
</organism>
<dbReference type="EC" id="1.1.1.25" evidence="1"/>
<dbReference type="EMBL" id="CP000117">
    <property type="protein sequence ID" value="ABA22714.1"/>
    <property type="molecule type" value="Genomic_DNA"/>
</dbReference>
<dbReference type="SMR" id="Q3M8H2"/>
<dbReference type="STRING" id="240292.Ava_3106"/>
<dbReference type="KEGG" id="ava:Ava_3106"/>
<dbReference type="eggNOG" id="COG0169">
    <property type="taxonomic scope" value="Bacteria"/>
</dbReference>
<dbReference type="HOGENOM" id="CLU_044063_4_1_3"/>
<dbReference type="UniPathway" id="UPA00053">
    <property type="reaction ID" value="UER00087"/>
</dbReference>
<dbReference type="Proteomes" id="UP000002533">
    <property type="component" value="Chromosome"/>
</dbReference>
<dbReference type="GO" id="GO:0005829">
    <property type="term" value="C:cytosol"/>
    <property type="evidence" value="ECO:0007669"/>
    <property type="project" value="TreeGrafter"/>
</dbReference>
<dbReference type="GO" id="GO:0050661">
    <property type="term" value="F:NADP binding"/>
    <property type="evidence" value="ECO:0007669"/>
    <property type="project" value="InterPro"/>
</dbReference>
<dbReference type="GO" id="GO:0004764">
    <property type="term" value="F:shikimate 3-dehydrogenase (NADP+) activity"/>
    <property type="evidence" value="ECO:0007669"/>
    <property type="project" value="UniProtKB-UniRule"/>
</dbReference>
<dbReference type="GO" id="GO:0008652">
    <property type="term" value="P:amino acid biosynthetic process"/>
    <property type="evidence" value="ECO:0007669"/>
    <property type="project" value="UniProtKB-KW"/>
</dbReference>
<dbReference type="GO" id="GO:0009073">
    <property type="term" value="P:aromatic amino acid family biosynthetic process"/>
    <property type="evidence" value="ECO:0007669"/>
    <property type="project" value="UniProtKB-KW"/>
</dbReference>
<dbReference type="GO" id="GO:0009423">
    <property type="term" value="P:chorismate biosynthetic process"/>
    <property type="evidence" value="ECO:0007669"/>
    <property type="project" value="UniProtKB-UniRule"/>
</dbReference>
<dbReference type="GO" id="GO:0019632">
    <property type="term" value="P:shikimate metabolic process"/>
    <property type="evidence" value="ECO:0007669"/>
    <property type="project" value="InterPro"/>
</dbReference>
<dbReference type="CDD" id="cd01065">
    <property type="entry name" value="NAD_bind_Shikimate_DH"/>
    <property type="match status" value="1"/>
</dbReference>
<dbReference type="Gene3D" id="3.40.50.10860">
    <property type="entry name" value="Leucine Dehydrogenase, chain A, domain 1"/>
    <property type="match status" value="1"/>
</dbReference>
<dbReference type="Gene3D" id="3.40.50.720">
    <property type="entry name" value="NAD(P)-binding Rossmann-like Domain"/>
    <property type="match status" value="1"/>
</dbReference>
<dbReference type="HAMAP" id="MF_00222">
    <property type="entry name" value="Shikimate_DH_AroE"/>
    <property type="match status" value="1"/>
</dbReference>
<dbReference type="InterPro" id="IPR046346">
    <property type="entry name" value="Aminoacid_DH-like_N_sf"/>
</dbReference>
<dbReference type="InterPro" id="IPR036291">
    <property type="entry name" value="NAD(P)-bd_dom_sf"/>
</dbReference>
<dbReference type="InterPro" id="IPR041121">
    <property type="entry name" value="SDH_C"/>
</dbReference>
<dbReference type="InterPro" id="IPR011342">
    <property type="entry name" value="Shikimate_DH"/>
</dbReference>
<dbReference type="InterPro" id="IPR013708">
    <property type="entry name" value="Shikimate_DH-bd_N"/>
</dbReference>
<dbReference type="InterPro" id="IPR022893">
    <property type="entry name" value="Shikimate_DH_fam"/>
</dbReference>
<dbReference type="NCBIfam" id="TIGR00507">
    <property type="entry name" value="aroE"/>
    <property type="match status" value="1"/>
</dbReference>
<dbReference type="NCBIfam" id="NF001314">
    <property type="entry name" value="PRK00258.2-2"/>
    <property type="match status" value="1"/>
</dbReference>
<dbReference type="PANTHER" id="PTHR21089:SF1">
    <property type="entry name" value="BIFUNCTIONAL 3-DEHYDROQUINATE DEHYDRATASE_SHIKIMATE DEHYDROGENASE, CHLOROPLASTIC"/>
    <property type="match status" value="1"/>
</dbReference>
<dbReference type="PANTHER" id="PTHR21089">
    <property type="entry name" value="SHIKIMATE DEHYDROGENASE"/>
    <property type="match status" value="1"/>
</dbReference>
<dbReference type="Pfam" id="PF18317">
    <property type="entry name" value="SDH_C"/>
    <property type="match status" value="1"/>
</dbReference>
<dbReference type="Pfam" id="PF08501">
    <property type="entry name" value="Shikimate_dh_N"/>
    <property type="match status" value="1"/>
</dbReference>
<dbReference type="SUPFAM" id="SSF53223">
    <property type="entry name" value="Aminoacid dehydrogenase-like, N-terminal domain"/>
    <property type="match status" value="1"/>
</dbReference>
<dbReference type="SUPFAM" id="SSF51735">
    <property type="entry name" value="NAD(P)-binding Rossmann-fold domains"/>
    <property type="match status" value="1"/>
</dbReference>
<keyword id="KW-0028">Amino-acid biosynthesis</keyword>
<keyword id="KW-0057">Aromatic amino acid biosynthesis</keyword>
<keyword id="KW-0521">NADP</keyword>
<keyword id="KW-0560">Oxidoreductase</keyword>
<name>AROE_TRIV2</name>
<sequence>MITGKTKLLGVIGHPVEHSLSPVMHNAAIAQLGLDYVYLPFPIAPDNLEAAIALLATIGVVGFSVTIPHKQAIIPLLAEISPVAQAIGAVNTVTRQNNQWVGTNTDIEGFIAPLQTTYKRDWSQQIAVILGNGGAARAVVAGCYQLGFAEIHVVGRNVQRLEEFRHSWDNSPIAENLQVHTWDYLAKLVPQANLLVNTTPIGMYPQVDESPLSTEELANLQTGAIAYDLIYIPKPTQFLQKAQQQGAIAIDGLEMLVQQGVAALKIWLQQDDIPVDVMRQALQKHLGLV</sequence>
<reference key="1">
    <citation type="journal article" date="2014" name="Stand. Genomic Sci.">
        <title>Complete genome sequence of Anabaena variabilis ATCC 29413.</title>
        <authorList>
            <person name="Thiel T."/>
            <person name="Pratte B.S."/>
            <person name="Zhong J."/>
            <person name="Goodwin L."/>
            <person name="Copeland A."/>
            <person name="Lucas S."/>
            <person name="Han C."/>
            <person name="Pitluck S."/>
            <person name="Land M.L."/>
            <person name="Kyrpides N.C."/>
            <person name="Woyke T."/>
        </authorList>
    </citation>
    <scope>NUCLEOTIDE SEQUENCE [LARGE SCALE GENOMIC DNA]</scope>
    <source>
        <strain>ATCC 29413 / PCC 7937</strain>
    </source>
</reference>
<accession>Q3M8H2</accession>
<protein>
    <recommendedName>
        <fullName evidence="1">Shikimate dehydrogenase (NADP(+))</fullName>
        <shortName evidence="1">SDH</shortName>
        <ecNumber evidence="1">1.1.1.25</ecNumber>
    </recommendedName>
</protein>
<gene>
    <name evidence="1" type="primary">aroE</name>
    <name type="ordered locus">Ava_3106</name>
</gene>
<feature type="chain" id="PRO_1000021255" description="Shikimate dehydrogenase (NADP(+))">
    <location>
        <begin position="1"/>
        <end position="289"/>
    </location>
</feature>
<feature type="active site" description="Proton acceptor" evidence="1">
    <location>
        <position position="70"/>
    </location>
</feature>
<feature type="binding site" evidence="1">
    <location>
        <begin position="19"/>
        <end position="21"/>
    </location>
    <ligand>
        <name>shikimate</name>
        <dbReference type="ChEBI" id="CHEBI:36208"/>
    </ligand>
</feature>
<feature type="binding site" evidence="1">
    <location>
        <position position="66"/>
    </location>
    <ligand>
        <name>shikimate</name>
        <dbReference type="ChEBI" id="CHEBI:36208"/>
    </ligand>
</feature>
<feature type="binding site" evidence="1">
    <location>
        <position position="91"/>
    </location>
    <ligand>
        <name>shikimate</name>
        <dbReference type="ChEBI" id="CHEBI:36208"/>
    </ligand>
</feature>
<feature type="binding site" evidence="1">
    <location>
        <position position="106"/>
    </location>
    <ligand>
        <name>shikimate</name>
        <dbReference type="ChEBI" id="CHEBI:36208"/>
    </ligand>
</feature>
<feature type="binding site" evidence="1">
    <location>
        <begin position="131"/>
        <end position="135"/>
    </location>
    <ligand>
        <name>NADP(+)</name>
        <dbReference type="ChEBI" id="CHEBI:58349"/>
    </ligand>
</feature>
<feature type="binding site" evidence="1">
    <location>
        <position position="229"/>
    </location>
    <ligand>
        <name>NADP(+)</name>
        <dbReference type="ChEBI" id="CHEBI:58349"/>
    </ligand>
</feature>
<feature type="binding site" evidence="1">
    <location>
        <position position="231"/>
    </location>
    <ligand>
        <name>shikimate</name>
        <dbReference type="ChEBI" id="CHEBI:36208"/>
    </ligand>
</feature>
<feature type="binding site" evidence="1">
    <location>
        <position position="252"/>
    </location>
    <ligand>
        <name>NADP(+)</name>
        <dbReference type="ChEBI" id="CHEBI:58349"/>
    </ligand>
</feature>
<evidence type="ECO:0000255" key="1">
    <source>
        <dbReference type="HAMAP-Rule" id="MF_00222"/>
    </source>
</evidence>
<comment type="function">
    <text evidence="1">Involved in the biosynthesis of the chorismate, which leads to the biosynthesis of aromatic amino acids. Catalyzes the reversible NADPH linked reduction of 3-dehydroshikimate (DHSA) to yield shikimate (SA).</text>
</comment>
<comment type="catalytic activity">
    <reaction evidence="1">
        <text>shikimate + NADP(+) = 3-dehydroshikimate + NADPH + H(+)</text>
        <dbReference type="Rhea" id="RHEA:17737"/>
        <dbReference type="ChEBI" id="CHEBI:15378"/>
        <dbReference type="ChEBI" id="CHEBI:16630"/>
        <dbReference type="ChEBI" id="CHEBI:36208"/>
        <dbReference type="ChEBI" id="CHEBI:57783"/>
        <dbReference type="ChEBI" id="CHEBI:58349"/>
        <dbReference type="EC" id="1.1.1.25"/>
    </reaction>
</comment>
<comment type="pathway">
    <text evidence="1">Metabolic intermediate biosynthesis; chorismate biosynthesis; chorismate from D-erythrose 4-phosphate and phosphoenolpyruvate: step 4/7.</text>
</comment>
<comment type="subunit">
    <text evidence="1">Homodimer.</text>
</comment>
<comment type="similarity">
    <text evidence="1">Belongs to the shikimate dehydrogenase family.</text>
</comment>